<protein>
    <recommendedName>
        <fullName>SHC SH2 domain-binding protein 1 homolog A</fullName>
    </recommendedName>
</protein>
<comment type="function">
    <text evidence="2">May play a role in signaling pathways governing cellular proliferation.</text>
</comment>
<comment type="subcellular location">
    <subcellularLocation>
        <location evidence="1">Midbody</location>
    </subcellularLocation>
    <subcellularLocation>
        <location evidence="1">Cytoplasm</location>
        <location evidence="1">Cytoskeleton</location>
        <location evidence="1">Spindle</location>
    </subcellularLocation>
</comment>
<proteinExistence type="evidence at transcript level"/>
<keyword id="KW-0175">Coiled coil</keyword>
<keyword id="KW-0963">Cytoplasm</keyword>
<keyword id="KW-0206">Cytoskeleton</keyword>
<keyword id="KW-1185">Reference proteome</keyword>
<keyword id="KW-0677">Repeat</keyword>
<feature type="chain" id="PRO_0000076317" description="SHC SH2 domain-binding protein 1 homolog A">
    <location>
        <begin position="1"/>
        <end position="699"/>
    </location>
</feature>
<feature type="repeat" description="PbH1 1">
    <location>
        <begin position="480"/>
        <end position="502"/>
    </location>
</feature>
<feature type="repeat" description="PbH1 2">
    <location>
        <begin position="503"/>
        <end position="524"/>
    </location>
</feature>
<feature type="repeat" description="PbH1 3">
    <location>
        <begin position="532"/>
        <end position="554"/>
    </location>
</feature>
<feature type="coiled-coil region" evidence="3">
    <location>
        <begin position="603"/>
        <end position="627"/>
    </location>
</feature>
<dbReference type="EMBL" id="BC073190">
    <property type="protein sequence ID" value="AAH73190.1"/>
    <property type="molecule type" value="mRNA"/>
</dbReference>
<dbReference type="RefSeq" id="NP_001085681.1">
    <property type="nucleotide sequence ID" value="NM_001092212.1"/>
</dbReference>
<dbReference type="SMR" id="Q6GPE9"/>
<dbReference type="DNASU" id="444107"/>
<dbReference type="GeneID" id="444107"/>
<dbReference type="KEGG" id="xla:444107"/>
<dbReference type="AGR" id="Xenbase:XB-GENE-6255971"/>
<dbReference type="CTD" id="444107"/>
<dbReference type="Xenbase" id="XB-GENE-6255971">
    <property type="gene designation" value="shcbp1.S"/>
</dbReference>
<dbReference type="OrthoDB" id="5978115at2759"/>
<dbReference type="Proteomes" id="UP000186698">
    <property type="component" value="Chromosome 4S"/>
</dbReference>
<dbReference type="Bgee" id="444107">
    <property type="expression patterns" value="Expressed in testis and 17 other cell types or tissues"/>
</dbReference>
<dbReference type="GO" id="GO:0005737">
    <property type="term" value="C:cytoplasm"/>
    <property type="evidence" value="ECO:0007669"/>
    <property type="project" value="UniProtKB-KW"/>
</dbReference>
<dbReference type="GO" id="GO:0030496">
    <property type="term" value="C:midbody"/>
    <property type="evidence" value="ECO:0007669"/>
    <property type="project" value="UniProtKB-SubCell"/>
</dbReference>
<dbReference type="GO" id="GO:0005819">
    <property type="term" value="C:spindle"/>
    <property type="evidence" value="ECO:0007669"/>
    <property type="project" value="UniProtKB-SubCell"/>
</dbReference>
<dbReference type="GO" id="GO:0008543">
    <property type="term" value="P:fibroblast growth factor receptor signaling pathway"/>
    <property type="evidence" value="ECO:0000250"/>
    <property type="project" value="UniProtKB"/>
</dbReference>
<dbReference type="GO" id="GO:2000177">
    <property type="term" value="P:regulation of neural precursor cell proliferation"/>
    <property type="evidence" value="ECO:0000250"/>
    <property type="project" value="UniProtKB"/>
</dbReference>
<dbReference type="FunFam" id="2.160.20.10:FF:000081">
    <property type="entry name" value="SHC SH2 domain-binding protein 1 homolog A"/>
    <property type="match status" value="1"/>
</dbReference>
<dbReference type="Gene3D" id="2.160.20.10">
    <property type="entry name" value="Single-stranded right-handed beta-helix, Pectin lyase-like"/>
    <property type="match status" value="1"/>
</dbReference>
<dbReference type="InterPro" id="IPR039448">
    <property type="entry name" value="Beta_helix"/>
</dbReference>
<dbReference type="InterPro" id="IPR006626">
    <property type="entry name" value="PbH1"/>
</dbReference>
<dbReference type="InterPro" id="IPR012334">
    <property type="entry name" value="Pectin_lyas_fold"/>
</dbReference>
<dbReference type="InterPro" id="IPR011050">
    <property type="entry name" value="Pectin_lyase_fold/virulence"/>
</dbReference>
<dbReference type="InterPro" id="IPR045140">
    <property type="entry name" value="SHCBP1-like"/>
</dbReference>
<dbReference type="PANTHER" id="PTHR14695:SF8">
    <property type="entry name" value="SHC SH2 DOMAIN-BINDING PROTEIN 1"/>
    <property type="match status" value="1"/>
</dbReference>
<dbReference type="PANTHER" id="PTHR14695">
    <property type="entry name" value="SHC SH2-DOMAIN BINDING PROTEIN 1-RELATED"/>
    <property type="match status" value="1"/>
</dbReference>
<dbReference type="Pfam" id="PF13229">
    <property type="entry name" value="Beta_helix"/>
    <property type="match status" value="1"/>
</dbReference>
<dbReference type="Pfam" id="PF23762">
    <property type="entry name" value="SHCBP_N"/>
    <property type="match status" value="1"/>
</dbReference>
<dbReference type="SMART" id="SM00710">
    <property type="entry name" value="PbH1"/>
    <property type="match status" value="3"/>
</dbReference>
<dbReference type="SUPFAM" id="SSF51126">
    <property type="entry name" value="Pectin lyase-like"/>
    <property type="match status" value="1"/>
</dbReference>
<organism>
    <name type="scientific">Xenopus laevis</name>
    <name type="common">African clawed frog</name>
    <dbReference type="NCBI Taxonomy" id="8355"/>
    <lineage>
        <taxon>Eukaryota</taxon>
        <taxon>Metazoa</taxon>
        <taxon>Chordata</taxon>
        <taxon>Craniata</taxon>
        <taxon>Vertebrata</taxon>
        <taxon>Euteleostomi</taxon>
        <taxon>Amphibia</taxon>
        <taxon>Batrachia</taxon>
        <taxon>Anura</taxon>
        <taxon>Pipoidea</taxon>
        <taxon>Pipidae</taxon>
        <taxon>Xenopodinae</taxon>
        <taxon>Xenopus</taxon>
        <taxon>Xenopus</taxon>
    </lineage>
</organism>
<gene>
    <name type="primary">shcbp1-a</name>
</gene>
<accession>Q6GPE9</accession>
<name>SHCBA_XENLA</name>
<sequence length="699" mass="79122">MAEAEAQFPPLQDGDDFFHVGSDRCSEELRDVKQVLFQEEDDSASDYGSYKRLGKVTSRTVPAGNMLFPDLFQTNNLLFYERFETYKDYMLGDCKPSEVKEFIAEYLEKALKPSGWNAIWHTDVFDVLVEVTDVEFSSLNAIVRLSEPFLCESHVSSIALESIKDLLDVKDQRVPLQEIRVVFDESGLYNQTALAIEHLRFFYQQIWRPWDEEEEDYFDYFVRCVEPRLRLHYDILEDRIPSGLVAEYSSLLLQCEEVYMQFTNLRNNLSNKDSDSESELDNVSMVEGMKMDNEMENLKRKLKLIENPLLRYLFCYQRNSGCHNVQAKGPRPNGGKVIHVVSTSMSILTLQCLTRERLQPESGNKDLEIQFHRDPLEAVNACYEGDLVIICPGLYAVYGLINIMDSIEIEGYGLPDDVVIEKMGKGDTFVACSGAHIKISNVKFVQHEAVEGIITIHSGKTELDNCVLQCETTGVTVKKSAELLMKYSDLYGAKGAGMEIYPGSKCTLIGNGIHHCRDGILIKDFIDVVCEIPKITMENNVIHNNEGYAVVLVKPSLDIEKNSHNEELEGGHLDDDDKMIEEQTSSNILQPNLNKAMGVEDKAVEHTNNLEKDQGNLAIAKEEVECEYAIDCEEAEGNQVIATELVANTRRKTKLHKKRLSTLGIVTADDKLTSQEIFVSIVGNQFKRNGKGTFGTFLF</sequence>
<reference key="1">
    <citation type="submission" date="2004-06" db="EMBL/GenBank/DDBJ databases">
        <authorList>
            <consortium name="NIH - Xenopus Gene Collection (XGC) project"/>
        </authorList>
    </citation>
    <scope>NUCLEOTIDE SEQUENCE [LARGE SCALE MRNA]</scope>
    <source>
        <tissue>Embryo</tissue>
    </source>
</reference>
<evidence type="ECO:0000250" key="1">
    <source>
        <dbReference type="UniProtKB" id="Q8NEM2"/>
    </source>
</evidence>
<evidence type="ECO:0000250" key="2">
    <source>
        <dbReference type="UniProtKB" id="Q9Z179"/>
    </source>
</evidence>
<evidence type="ECO:0000255" key="3"/>